<proteinExistence type="inferred from homology"/>
<name>TRUB_SODGM</name>
<protein>
    <recommendedName>
        <fullName evidence="1">tRNA pseudouridine synthase B</fullName>
        <ecNumber evidence="1">5.4.99.25</ecNumber>
    </recommendedName>
    <alternativeName>
        <fullName evidence="1">tRNA pseudouridine(55) synthase</fullName>
        <shortName evidence="1">Psi55 synthase</shortName>
    </alternativeName>
    <alternativeName>
        <fullName evidence="1">tRNA pseudouridylate synthase</fullName>
    </alternativeName>
    <alternativeName>
        <fullName evidence="1">tRNA-uridine isomerase</fullName>
    </alternativeName>
</protein>
<sequence length="311" mass="34038">MGRPSRRGRDIDGIVLLDKPLGLSSNDLLQKVKRLFRANKAGHTGALDPLATGMLPVCLGEATKFSQHLLDADKRYRVIARLGERTDTSDAEGQTVSVRPVSLDKTRLEAALDHFRGESSQVPSMFSALKHQGRPLYEYARKGITVEREARPIHVYDLQLHRWDLTKVELEIHCSKGTYIRTIIDDLGERLGCGAHVMALRRLAVARYPIERMVTLAALQAIAADAPPDTLAQLDALLLPMDSAVADMPLVNLPSDLAARLRLGQTVAVTAQPQAGLVRLTEGDAGRFFGIGEIAAPGRLTPRRLIAEPRA</sequence>
<gene>
    <name evidence="1" type="primary">truB</name>
    <name type="ordered locus">SG0379</name>
</gene>
<accession>Q2NW21</accession>
<feature type="chain" id="PRO_1000084686" description="tRNA pseudouridine synthase B">
    <location>
        <begin position="1"/>
        <end position="311"/>
    </location>
</feature>
<feature type="active site" description="Nucleophile" evidence="1">
    <location>
        <position position="48"/>
    </location>
</feature>
<feature type="binding site" evidence="1">
    <location>
        <position position="43"/>
    </location>
    <ligand>
        <name>substrate</name>
    </ligand>
</feature>
<feature type="binding site" evidence="1">
    <location>
        <position position="76"/>
    </location>
    <ligand>
        <name>substrate</name>
    </ligand>
</feature>
<feature type="binding site" evidence="1">
    <location>
        <position position="179"/>
    </location>
    <ligand>
        <name>substrate</name>
    </ligand>
</feature>
<feature type="binding site" evidence="1">
    <location>
        <position position="200"/>
    </location>
    <ligand>
        <name>substrate</name>
    </ligand>
</feature>
<dbReference type="EC" id="5.4.99.25" evidence="1"/>
<dbReference type="EMBL" id="AP008232">
    <property type="protein sequence ID" value="BAE73654.1"/>
    <property type="molecule type" value="Genomic_DNA"/>
</dbReference>
<dbReference type="RefSeq" id="WP_011410242.1">
    <property type="nucleotide sequence ID" value="NC_007712.1"/>
</dbReference>
<dbReference type="SMR" id="Q2NW21"/>
<dbReference type="STRING" id="343509.SG0379"/>
<dbReference type="KEGG" id="sgl:SG0379"/>
<dbReference type="eggNOG" id="COG0130">
    <property type="taxonomic scope" value="Bacteria"/>
</dbReference>
<dbReference type="HOGENOM" id="CLU_032087_0_3_6"/>
<dbReference type="OrthoDB" id="9802309at2"/>
<dbReference type="BioCyc" id="SGLO343509:SGP1_RS03560-MONOMER"/>
<dbReference type="Proteomes" id="UP000001932">
    <property type="component" value="Chromosome"/>
</dbReference>
<dbReference type="GO" id="GO:0003723">
    <property type="term" value="F:RNA binding"/>
    <property type="evidence" value="ECO:0007669"/>
    <property type="project" value="InterPro"/>
</dbReference>
<dbReference type="GO" id="GO:0160148">
    <property type="term" value="F:tRNA pseudouridine(55) synthase activity"/>
    <property type="evidence" value="ECO:0007669"/>
    <property type="project" value="UniProtKB-EC"/>
</dbReference>
<dbReference type="GO" id="GO:1990481">
    <property type="term" value="P:mRNA pseudouridine synthesis"/>
    <property type="evidence" value="ECO:0007669"/>
    <property type="project" value="TreeGrafter"/>
</dbReference>
<dbReference type="GO" id="GO:0031119">
    <property type="term" value="P:tRNA pseudouridine synthesis"/>
    <property type="evidence" value="ECO:0007669"/>
    <property type="project" value="UniProtKB-UniRule"/>
</dbReference>
<dbReference type="CDD" id="cd02573">
    <property type="entry name" value="PseudoU_synth_EcTruB"/>
    <property type="match status" value="1"/>
</dbReference>
<dbReference type="CDD" id="cd21152">
    <property type="entry name" value="PUA_TruB_bacterial"/>
    <property type="match status" value="1"/>
</dbReference>
<dbReference type="FunFam" id="3.30.2350.10:FF:000003">
    <property type="entry name" value="tRNA pseudouridine synthase B"/>
    <property type="match status" value="1"/>
</dbReference>
<dbReference type="Gene3D" id="3.30.2350.10">
    <property type="entry name" value="Pseudouridine synthase"/>
    <property type="match status" value="1"/>
</dbReference>
<dbReference type="Gene3D" id="2.30.130.10">
    <property type="entry name" value="PUA domain"/>
    <property type="match status" value="1"/>
</dbReference>
<dbReference type="HAMAP" id="MF_01080">
    <property type="entry name" value="TruB_bact"/>
    <property type="match status" value="1"/>
</dbReference>
<dbReference type="InterPro" id="IPR020103">
    <property type="entry name" value="PsdUridine_synth_cat_dom_sf"/>
</dbReference>
<dbReference type="InterPro" id="IPR002501">
    <property type="entry name" value="PsdUridine_synth_N"/>
</dbReference>
<dbReference type="InterPro" id="IPR015947">
    <property type="entry name" value="PUA-like_sf"/>
</dbReference>
<dbReference type="InterPro" id="IPR036974">
    <property type="entry name" value="PUA_sf"/>
</dbReference>
<dbReference type="InterPro" id="IPR014780">
    <property type="entry name" value="tRNA_psdUridine_synth_TruB"/>
</dbReference>
<dbReference type="InterPro" id="IPR015240">
    <property type="entry name" value="tRNA_sdUridine_synth_fam1_C"/>
</dbReference>
<dbReference type="InterPro" id="IPR032819">
    <property type="entry name" value="TruB_C"/>
</dbReference>
<dbReference type="NCBIfam" id="TIGR00431">
    <property type="entry name" value="TruB"/>
    <property type="match status" value="1"/>
</dbReference>
<dbReference type="PANTHER" id="PTHR13767:SF2">
    <property type="entry name" value="PSEUDOURIDYLATE SYNTHASE TRUB1"/>
    <property type="match status" value="1"/>
</dbReference>
<dbReference type="PANTHER" id="PTHR13767">
    <property type="entry name" value="TRNA-PSEUDOURIDINE SYNTHASE"/>
    <property type="match status" value="1"/>
</dbReference>
<dbReference type="Pfam" id="PF09157">
    <property type="entry name" value="TruB-C_2"/>
    <property type="match status" value="1"/>
</dbReference>
<dbReference type="Pfam" id="PF16198">
    <property type="entry name" value="TruB_C_2"/>
    <property type="match status" value="1"/>
</dbReference>
<dbReference type="Pfam" id="PF01509">
    <property type="entry name" value="TruB_N"/>
    <property type="match status" value="1"/>
</dbReference>
<dbReference type="SUPFAM" id="SSF55120">
    <property type="entry name" value="Pseudouridine synthase"/>
    <property type="match status" value="1"/>
</dbReference>
<dbReference type="SUPFAM" id="SSF88697">
    <property type="entry name" value="PUA domain-like"/>
    <property type="match status" value="1"/>
</dbReference>
<evidence type="ECO:0000255" key="1">
    <source>
        <dbReference type="HAMAP-Rule" id="MF_01080"/>
    </source>
</evidence>
<keyword id="KW-0413">Isomerase</keyword>
<keyword id="KW-0819">tRNA processing</keyword>
<reference key="1">
    <citation type="journal article" date="2006" name="Genome Res.">
        <title>Massive genome erosion and functional adaptations provide insights into the symbiotic lifestyle of Sodalis glossinidius in the tsetse host.</title>
        <authorList>
            <person name="Toh H."/>
            <person name="Weiss B.L."/>
            <person name="Perkin S.A.H."/>
            <person name="Yamashita A."/>
            <person name="Oshima K."/>
            <person name="Hattori M."/>
            <person name="Aksoy S."/>
        </authorList>
    </citation>
    <scope>NUCLEOTIDE SEQUENCE [LARGE SCALE GENOMIC DNA]</scope>
    <source>
        <strain>morsitans</strain>
    </source>
</reference>
<comment type="function">
    <text evidence="1">Responsible for synthesis of pseudouridine from uracil-55 in the psi GC loop of transfer RNAs.</text>
</comment>
<comment type="catalytic activity">
    <reaction evidence="1">
        <text>uridine(55) in tRNA = pseudouridine(55) in tRNA</text>
        <dbReference type="Rhea" id="RHEA:42532"/>
        <dbReference type="Rhea" id="RHEA-COMP:10101"/>
        <dbReference type="Rhea" id="RHEA-COMP:10102"/>
        <dbReference type="ChEBI" id="CHEBI:65314"/>
        <dbReference type="ChEBI" id="CHEBI:65315"/>
        <dbReference type="EC" id="5.4.99.25"/>
    </reaction>
</comment>
<comment type="similarity">
    <text evidence="1">Belongs to the pseudouridine synthase TruB family. Type 1 subfamily.</text>
</comment>
<organism>
    <name type="scientific">Sodalis glossinidius (strain morsitans)</name>
    <dbReference type="NCBI Taxonomy" id="343509"/>
    <lineage>
        <taxon>Bacteria</taxon>
        <taxon>Pseudomonadati</taxon>
        <taxon>Pseudomonadota</taxon>
        <taxon>Gammaproteobacteria</taxon>
        <taxon>Enterobacterales</taxon>
        <taxon>Bruguierivoracaceae</taxon>
        <taxon>Sodalis</taxon>
    </lineage>
</organism>